<proteinExistence type="evidence at protein level"/>
<comment type="function">
    <text evidence="2">Mu-conotoxins block voltage-gated sodium channels (Nav). This synthetic toxin potently blocks rNav1.3/SCN3A. It also moderately blocks rNav1.1/SCN1A, rNav1.2/SCN2A, rNav1.4/SCN4A, mNav1.6/SCN8A, and Nav1.7/SCN9A. sodium channels. This block is very slowly reversible.</text>
</comment>
<comment type="subcellular location">
    <subcellularLocation>
        <location evidence="5">Secreted</location>
    </subcellularLocation>
</comment>
<comment type="tissue specificity">
    <text evidence="5">Expressed by the venom duct.</text>
</comment>
<comment type="domain">
    <text evidence="4">The cysteine framework is III (CC-C-C-CC). Classified in the M-5 branch, since 5 residues stand between the fourth and the fifth cysteine residues.</text>
</comment>
<comment type="miscellaneous">
    <text evidence="6">Negative results: does not inhibit Nav1.5/SCN5A and Nav1.8/SCN10A.</text>
</comment>
<comment type="similarity">
    <text evidence="4">Belongs to the conotoxin M superfamily.</text>
</comment>
<sequence length="22" mass="2398">QGCCNVPNGCSGRWCRDHAQCC</sequence>
<name>CM3A_CONMA</name>
<dbReference type="ConoServer" id="1691">
    <property type="toxin name" value="MIIIA"/>
</dbReference>
<dbReference type="GO" id="GO:0005576">
    <property type="term" value="C:extracellular region"/>
    <property type="evidence" value="ECO:0007669"/>
    <property type="project" value="UniProtKB-SubCell"/>
</dbReference>
<dbReference type="GO" id="GO:0017080">
    <property type="term" value="F:sodium channel regulator activity"/>
    <property type="evidence" value="ECO:0007669"/>
    <property type="project" value="UniProtKB-KW"/>
</dbReference>
<dbReference type="GO" id="GO:0090729">
    <property type="term" value="F:toxin activity"/>
    <property type="evidence" value="ECO:0007669"/>
    <property type="project" value="UniProtKB-KW"/>
</dbReference>
<accession>P0C1U2</accession>
<keyword id="KW-0027">Amidation</keyword>
<keyword id="KW-1015">Disulfide bond</keyword>
<keyword id="KW-0872">Ion channel impairing toxin</keyword>
<keyword id="KW-0528">Neurotoxin</keyword>
<keyword id="KW-0873">Pyrrolidone carboxylic acid</keyword>
<keyword id="KW-0964">Secreted</keyword>
<keyword id="KW-0800">Toxin</keyword>
<keyword id="KW-0738">Voltage-gated sodium channel impairing toxin</keyword>
<protein>
    <recommendedName>
        <fullName evidence="3">Mu-conotoxin MIIIA</fullName>
    </recommendedName>
</protein>
<organism>
    <name type="scientific">Conus magus</name>
    <name type="common">Magical cone</name>
    <dbReference type="NCBI Taxonomy" id="6492"/>
    <lineage>
        <taxon>Eukaryota</taxon>
        <taxon>Metazoa</taxon>
        <taxon>Spiralia</taxon>
        <taxon>Lophotrochozoa</taxon>
        <taxon>Mollusca</taxon>
        <taxon>Gastropoda</taxon>
        <taxon>Caenogastropoda</taxon>
        <taxon>Neogastropoda</taxon>
        <taxon>Conoidea</taxon>
        <taxon>Conidae</taxon>
        <taxon>Conus</taxon>
        <taxon>Pionoconus</taxon>
    </lineage>
</organism>
<reference key="1">
    <citation type="journal article" date="2006" name="Biochemistry">
        <title>Structural and functional diversities among mu-conotoxins targeting TTX-resistant sodium channels.</title>
        <authorList>
            <person name="Zhang M.-M."/>
            <person name="Fiedler B."/>
            <person name="Green B.R."/>
            <person name="Catlin P."/>
            <person name="Watkins M."/>
            <person name="Garrett J.E."/>
            <person name="Smith B.J."/>
            <person name="Yoshikami D."/>
            <person name="Olivera B.M."/>
            <person name="Bulaj G."/>
        </authorList>
    </citation>
    <scope>NUCLEOTIDE SEQUENCE [MRNA]</scope>
    <scope>SYNTHESIS</scope>
    <scope>AMIDATION AT CYS-22</scope>
    <scope>PYROGLUTAMATE FORMATION AT GLN-1</scope>
    <source>
        <tissue>Venom duct</tissue>
    </source>
</reference>
<reference key="2">
    <citation type="journal article" date="2011" name="Proc. Natl. Acad. Sci. U.S.A.">
        <title>mu-Conotoxins that differentially block sodium channels Nav1.1 through 1.8 identify those responsible for action potentials in sciatic nerve.</title>
        <authorList>
            <person name="Wilson M.J."/>
            <person name="Yoshikami D."/>
            <person name="Azam L."/>
            <person name="Gajewiak J."/>
            <person name="Olivera B.M."/>
            <person name="Bulaj G."/>
            <person name="Zhang M.M."/>
        </authorList>
    </citation>
    <scope>FUNCTION ON SODIUM CHANNELS</scope>
    <scope>SYNTHESIS</scope>
    <scope>AMIDATION AT CYS-22</scope>
    <scope>PYROGLUTAMATE FORMATION AT GLN-1</scope>
</reference>
<feature type="peptide" id="PRO_0000249201" description="Mu-conotoxin MIIIA">
    <location>
        <begin position="1"/>
        <end position="22"/>
    </location>
</feature>
<feature type="modified residue" description="Pyrrolidone carboxylic acid" evidence="5 6">
    <location>
        <position position="1"/>
    </location>
</feature>
<feature type="modified residue" description="Cysteine amide" evidence="5 6">
    <location>
        <position position="22"/>
    </location>
</feature>
<feature type="disulfide bond" evidence="1">
    <location>
        <begin position="3"/>
        <end position="15"/>
    </location>
</feature>
<feature type="disulfide bond" evidence="1">
    <location>
        <begin position="4"/>
        <end position="21"/>
    </location>
</feature>
<feature type="disulfide bond" evidence="1">
    <location>
        <begin position="10"/>
        <end position="22"/>
    </location>
</feature>
<evidence type="ECO:0000250" key="1"/>
<evidence type="ECO:0000269" key="2">
    <source>
    </source>
</evidence>
<evidence type="ECO:0000303" key="3">
    <source>
    </source>
</evidence>
<evidence type="ECO:0000305" key="4"/>
<evidence type="ECO:0000305" key="5">
    <source>
    </source>
</evidence>
<evidence type="ECO:0000305" key="6">
    <source>
    </source>
</evidence>